<accession>Q8TGU0</accession>
<accession>D6VUD0</accession>
<reference key="1">
    <citation type="journal article" date="1986" name="Nature">
        <title>Yeast plasma membrane ATPase is essential for growth and has homology with (Na+ + K+), K+- and Ca2+-ATPases.</title>
        <authorList>
            <person name="Serrano R."/>
            <person name="Kielland-Brandt M.C."/>
            <person name="Fink G.R."/>
        </authorList>
    </citation>
    <scope>NUCLEOTIDE SEQUENCE [GENOMIC DNA]</scope>
</reference>
<reference key="2">
    <citation type="journal article" date="1997" name="Nature">
        <title>The nucleotide sequence of Saccharomyces cerevisiae chromosome VII.</title>
        <authorList>
            <person name="Tettelin H."/>
            <person name="Agostoni-Carbone M.L."/>
            <person name="Albermann K."/>
            <person name="Albers M."/>
            <person name="Arroyo J."/>
            <person name="Backes U."/>
            <person name="Barreiros T."/>
            <person name="Bertani I."/>
            <person name="Bjourson A.J."/>
            <person name="Brueckner M."/>
            <person name="Bruschi C.V."/>
            <person name="Carignani G."/>
            <person name="Castagnoli L."/>
            <person name="Cerdan E."/>
            <person name="Clemente M.L."/>
            <person name="Coblenz A."/>
            <person name="Coglievina M."/>
            <person name="Coissac E."/>
            <person name="Defoor E."/>
            <person name="Del Bino S."/>
            <person name="Delius H."/>
            <person name="Delneri D."/>
            <person name="de Wergifosse P."/>
            <person name="Dujon B."/>
            <person name="Durand P."/>
            <person name="Entian K.-D."/>
            <person name="Eraso P."/>
            <person name="Escribano V."/>
            <person name="Fabiani L."/>
            <person name="Fartmann B."/>
            <person name="Feroli F."/>
            <person name="Feuermann M."/>
            <person name="Frontali L."/>
            <person name="Garcia-Gonzalez M."/>
            <person name="Garcia-Saez M.I."/>
            <person name="Goffeau A."/>
            <person name="Guerreiro P."/>
            <person name="Hani J."/>
            <person name="Hansen M."/>
            <person name="Hebling U."/>
            <person name="Hernandez K."/>
            <person name="Heumann K."/>
            <person name="Hilger F."/>
            <person name="Hofmann B."/>
            <person name="Indge K.J."/>
            <person name="James C.M."/>
            <person name="Klima R."/>
            <person name="Koetter P."/>
            <person name="Kramer B."/>
            <person name="Kramer W."/>
            <person name="Lauquin G."/>
            <person name="Leuther H."/>
            <person name="Louis E.J."/>
            <person name="Maillier E."/>
            <person name="Marconi A."/>
            <person name="Martegani E."/>
            <person name="Mazon M.J."/>
            <person name="Mazzoni C."/>
            <person name="McReynolds A.D.K."/>
            <person name="Melchioretto P."/>
            <person name="Mewes H.-W."/>
            <person name="Minenkova O."/>
            <person name="Mueller-Auer S."/>
            <person name="Nawrocki A."/>
            <person name="Netter P."/>
            <person name="Neu R."/>
            <person name="Nombela C."/>
            <person name="Oliver S.G."/>
            <person name="Panzeri L."/>
            <person name="Paoluzi S."/>
            <person name="Plevani P."/>
            <person name="Portetelle D."/>
            <person name="Portillo F."/>
            <person name="Potier S."/>
            <person name="Purnelle B."/>
            <person name="Rieger M."/>
            <person name="Riles L."/>
            <person name="Rinaldi T."/>
            <person name="Robben J."/>
            <person name="Rodrigues-Pousada C."/>
            <person name="Rodriguez-Belmonte E."/>
            <person name="Rodriguez-Torres A.M."/>
            <person name="Rose M."/>
            <person name="Ruzzi M."/>
            <person name="Saliola M."/>
            <person name="Sanchez-Perez M."/>
            <person name="Schaefer B."/>
            <person name="Schaefer M."/>
            <person name="Scharfe M."/>
            <person name="Schmidheini T."/>
            <person name="Schreer A."/>
            <person name="Skala J."/>
            <person name="Souciet J.-L."/>
            <person name="Steensma H.Y."/>
            <person name="Talla E."/>
            <person name="Thierry A."/>
            <person name="Vandenbol M."/>
            <person name="van der Aart Q.J.M."/>
            <person name="Van Dyck L."/>
            <person name="Vanoni M."/>
            <person name="Verhasselt P."/>
            <person name="Voet M."/>
            <person name="Volckaert G."/>
            <person name="Wambutt R."/>
            <person name="Watson M.D."/>
            <person name="Weber N."/>
            <person name="Wedler E."/>
            <person name="Wedler H."/>
            <person name="Wipfli P."/>
            <person name="Wolf K."/>
            <person name="Wright L.F."/>
            <person name="Zaccaria P."/>
            <person name="Zimmermann M."/>
            <person name="Zollner A."/>
            <person name="Kleine K."/>
        </authorList>
    </citation>
    <scope>NUCLEOTIDE SEQUENCE [LARGE SCALE GENOMIC DNA]</scope>
    <source>
        <strain>ATCC 204508 / S288c</strain>
    </source>
</reference>
<reference key="3">
    <citation type="journal article" date="2014" name="G3 (Bethesda)">
        <title>The reference genome sequence of Saccharomyces cerevisiae: Then and now.</title>
        <authorList>
            <person name="Engel S.R."/>
            <person name="Dietrich F.S."/>
            <person name="Fisk D.G."/>
            <person name="Binkley G."/>
            <person name="Balakrishnan R."/>
            <person name="Costanzo M.C."/>
            <person name="Dwight S.S."/>
            <person name="Hitz B.C."/>
            <person name="Karra K."/>
            <person name="Nash R.S."/>
            <person name="Weng S."/>
            <person name="Wong E.D."/>
            <person name="Lloyd P."/>
            <person name="Skrzypek M.S."/>
            <person name="Miyasato S.R."/>
            <person name="Simison M."/>
            <person name="Cherry J.M."/>
        </authorList>
    </citation>
    <scope>GENOME REANNOTATION</scope>
    <source>
        <strain>ATCC 204508 / S288c</strain>
    </source>
</reference>
<reference key="4">
    <citation type="journal article" date="2002" name="Nat. Biotechnol.">
        <title>An integrated approach for finding overlooked genes in yeast.</title>
        <authorList>
            <person name="Kumar A."/>
            <person name="Harrison P.M."/>
            <person name="Cheung K.-H."/>
            <person name="Lan N."/>
            <person name="Echols N."/>
            <person name="Bertone P."/>
            <person name="Miller P."/>
            <person name="Gerstein M.B."/>
            <person name="Snyder M."/>
        </authorList>
    </citation>
    <scope>NUCLEOTIDE SEQUENCE [GENOMIC DNA]</scope>
</reference>
<protein>
    <recommendedName>
        <fullName>Uncharacterized protein YGL007C-A</fullName>
    </recommendedName>
</protein>
<gene>
    <name type="ordered locus">YGL007C-A</name>
</gene>
<sequence length="28" mass="3169">MLPSISFDYIKRPNIVLFSNVLSLSSNI</sequence>
<keyword id="KW-1185">Reference proteome</keyword>
<name>YG007_YEAST</name>
<proteinExistence type="predicted"/>
<organism>
    <name type="scientific">Saccharomyces cerevisiae (strain ATCC 204508 / S288c)</name>
    <name type="common">Baker's yeast</name>
    <dbReference type="NCBI Taxonomy" id="559292"/>
    <lineage>
        <taxon>Eukaryota</taxon>
        <taxon>Fungi</taxon>
        <taxon>Dikarya</taxon>
        <taxon>Ascomycota</taxon>
        <taxon>Saccharomycotina</taxon>
        <taxon>Saccharomycetes</taxon>
        <taxon>Saccharomycetales</taxon>
        <taxon>Saccharomycetaceae</taxon>
        <taxon>Saccharomyces</taxon>
    </lineage>
</organism>
<dbReference type="EMBL" id="X03534">
    <property type="status" value="NOT_ANNOTATED_CDS"/>
    <property type="molecule type" value="Genomic_DNA"/>
</dbReference>
<dbReference type="EMBL" id="Z72529">
    <property type="status" value="NOT_ANNOTATED_CDS"/>
    <property type="molecule type" value="Genomic_DNA"/>
</dbReference>
<dbReference type="EMBL" id="Z72530">
    <property type="status" value="NOT_ANNOTATED_CDS"/>
    <property type="molecule type" value="Genomic_DNA"/>
</dbReference>
<dbReference type="EMBL" id="AF479895">
    <property type="protein sequence ID" value="AAL79208.1"/>
    <property type="molecule type" value="Genomic_DNA"/>
</dbReference>
<dbReference type="EMBL" id="BK006941">
    <property type="protein sequence ID" value="DAA08091.1"/>
    <property type="molecule type" value="Genomic_DNA"/>
</dbReference>
<dbReference type="RefSeq" id="NP_878075.3">
    <property type="nucleotide sequence ID" value="NM_001184592.3"/>
</dbReference>
<dbReference type="BioGRID" id="36997">
    <property type="interactions" value="3"/>
</dbReference>
<dbReference type="FunCoup" id="Q8TGU0">
    <property type="interactions" value="34"/>
</dbReference>
<dbReference type="STRING" id="4932.YGL007C-A"/>
<dbReference type="PaxDb" id="4932-YGL007C-A"/>
<dbReference type="EnsemblFungi" id="YGL007C-A_mRNA">
    <property type="protein sequence ID" value="YGL007C-A"/>
    <property type="gene ID" value="YGL007C-A"/>
</dbReference>
<dbReference type="GeneID" id="1466455"/>
<dbReference type="KEGG" id="sce:YGL007C-A"/>
<dbReference type="AGR" id="SGD:S000028632"/>
<dbReference type="SGD" id="S000028632">
    <property type="gene designation" value="YGL007C-A"/>
</dbReference>
<dbReference type="VEuPathDB" id="FungiDB:YGL007C-A"/>
<dbReference type="HOGENOM" id="CLU_3413161_0_0_1"/>
<dbReference type="InParanoid" id="Q8TGU0"/>
<dbReference type="BioCyc" id="YEAST:G3O-31013-MONOMER"/>
<dbReference type="BioGRID-ORCS" id="1466455">
    <property type="hits" value="0 hits in 10 CRISPR screens"/>
</dbReference>
<dbReference type="PRO" id="PR:Q8TGU0"/>
<dbReference type="Proteomes" id="UP000002311">
    <property type="component" value="Chromosome VII"/>
</dbReference>
<feature type="chain" id="PRO_0000245380" description="Uncharacterized protein YGL007C-A">
    <location>
        <begin position="1"/>
        <end position="28"/>
    </location>
</feature>